<proteinExistence type="evidence at protein level"/>
<keyword id="KW-1003">Cell membrane</keyword>
<keyword id="KW-1015">Disulfide bond</keyword>
<keyword id="KW-0325">Glycoprotein</keyword>
<keyword id="KW-0393">Immunoglobulin domain</keyword>
<keyword id="KW-0433">Leucine-rich repeat</keyword>
<keyword id="KW-0472">Membrane</keyword>
<keyword id="KW-0628">Postsynaptic cell membrane</keyword>
<keyword id="KW-1185">Reference proteome</keyword>
<keyword id="KW-0677">Repeat</keyword>
<keyword id="KW-0732">Signal</keyword>
<keyword id="KW-0770">Synapse</keyword>
<keyword id="KW-0812">Transmembrane</keyword>
<keyword id="KW-1133">Transmembrane helix</keyword>
<sequence length="788" mass="84963">METLLGGLLAFGMAFAVVDACPKYCVCQNLSESLGTLCPSKGLLFVPPDIDRRTVELRLGGNFIIHIGRQDFANMTGLVDLTLSRNTISHIQPFSFLDLESLRSLHLDSNRLPSLGEDTLRGLVNLQHLIVNNNQLGGIADDAFEDFLLTLEDLDLSYNNLHGLPWDSVRRMVNLHQLSLDHNLLDHIAEGTFADLQKLARLDLTSNRLQKLPPDPIFARSQASLLTATPFAPPLSFSFGGNPLHCNCELLWLRRLERDDDLETCGSPGSLKGRYFWHIREEEFVCEPPLITQHTHKLLVLEGQAATLKCKAIGDPSPLIHWVAPDDRLVGNSSRTAVYDNGTLDILITTSQDSGPFTCIAANAAGEATATVEVSIVQLPHLSNSTSRMAPPKSRLSDITGSSKTSRGGGGSGAGEPPKSTPERAVLVSDVTTTSALVKWSVSKSAPRVKMYQLQYNCSDDEVLIYRMIPASNKAFVVNNLVSGTGYDLCVLAMWDDTATTLTATNIVGCAQFFTKADYPQCQSMHSQILGGTMILVIGGIIVATLLVFIVILMVRYKVCNHDTPGKMAAATVSNVYSQTNGSQPPPLGGIPVGQLPQAPPKVVVRNELMDFSTSLARACDSSSSSSLGSGEAAGLGRGPWRLPPPAPRPKPSLDRLMGAFASLDLKSQRKEELLDSRTPAGRGAGTSSRGHHSDREPLLGPPATRARSLLPLPLEGKAKRSHSFDMGDFAAAAAAVPGGYSPPRRVSNIWTKRSLSVNGMLLPFEESDLVGARGTFGSSEWVMESTV</sequence>
<gene>
    <name type="primary">Lrfn2</name>
    <name type="synonym">Kiaa1246</name>
    <name type="synonym">Salm1</name>
</gene>
<reference key="1">
    <citation type="journal article" date="2005" name="Science">
        <title>The transcriptional landscape of the mammalian genome.</title>
        <authorList>
            <person name="Carninci P."/>
            <person name="Kasukawa T."/>
            <person name="Katayama S."/>
            <person name="Gough J."/>
            <person name="Frith M.C."/>
            <person name="Maeda N."/>
            <person name="Oyama R."/>
            <person name="Ravasi T."/>
            <person name="Lenhard B."/>
            <person name="Wells C."/>
            <person name="Kodzius R."/>
            <person name="Shimokawa K."/>
            <person name="Bajic V.B."/>
            <person name="Brenner S.E."/>
            <person name="Batalov S."/>
            <person name="Forrest A.R."/>
            <person name="Zavolan M."/>
            <person name="Davis M.J."/>
            <person name="Wilming L.G."/>
            <person name="Aidinis V."/>
            <person name="Allen J.E."/>
            <person name="Ambesi-Impiombato A."/>
            <person name="Apweiler R."/>
            <person name="Aturaliya R.N."/>
            <person name="Bailey T.L."/>
            <person name="Bansal M."/>
            <person name="Baxter L."/>
            <person name="Beisel K.W."/>
            <person name="Bersano T."/>
            <person name="Bono H."/>
            <person name="Chalk A.M."/>
            <person name="Chiu K.P."/>
            <person name="Choudhary V."/>
            <person name="Christoffels A."/>
            <person name="Clutterbuck D.R."/>
            <person name="Crowe M.L."/>
            <person name="Dalla E."/>
            <person name="Dalrymple B.P."/>
            <person name="de Bono B."/>
            <person name="Della Gatta G."/>
            <person name="di Bernardo D."/>
            <person name="Down T."/>
            <person name="Engstrom P."/>
            <person name="Fagiolini M."/>
            <person name="Faulkner G."/>
            <person name="Fletcher C.F."/>
            <person name="Fukushima T."/>
            <person name="Furuno M."/>
            <person name="Futaki S."/>
            <person name="Gariboldi M."/>
            <person name="Georgii-Hemming P."/>
            <person name="Gingeras T.R."/>
            <person name="Gojobori T."/>
            <person name="Green R.E."/>
            <person name="Gustincich S."/>
            <person name="Harbers M."/>
            <person name="Hayashi Y."/>
            <person name="Hensch T.K."/>
            <person name="Hirokawa N."/>
            <person name="Hill D."/>
            <person name="Huminiecki L."/>
            <person name="Iacono M."/>
            <person name="Ikeo K."/>
            <person name="Iwama A."/>
            <person name="Ishikawa T."/>
            <person name="Jakt M."/>
            <person name="Kanapin A."/>
            <person name="Katoh M."/>
            <person name="Kawasawa Y."/>
            <person name="Kelso J."/>
            <person name="Kitamura H."/>
            <person name="Kitano H."/>
            <person name="Kollias G."/>
            <person name="Krishnan S.P."/>
            <person name="Kruger A."/>
            <person name="Kummerfeld S.K."/>
            <person name="Kurochkin I.V."/>
            <person name="Lareau L.F."/>
            <person name="Lazarevic D."/>
            <person name="Lipovich L."/>
            <person name="Liu J."/>
            <person name="Liuni S."/>
            <person name="McWilliam S."/>
            <person name="Madan Babu M."/>
            <person name="Madera M."/>
            <person name="Marchionni L."/>
            <person name="Matsuda H."/>
            <person name="Matsuzawa S."/>
            <person name="Miki H."/>
            <person name="Mignone F."/>
            <person name="Miyake S."/>
            <person name="Morris K."/>
            <person name="Mottagui-Tabar S."/>
            <person name="Mulder N."/>
            <person name="Nakano N."/>
            <person name="Nakauchi H."/>
            <person name="Ng P."/>
            <person name="Nilsson R."/>
            <person name="Nishiguchi S."/>
            <person name="Nishikawa S."/>
            <person name="Nori F."/>
            <person name="Ohara O."/>
            <person name="Okazaki Y."/>
            <person name="Orlando V."/>
            <person name="Pang K.C."/>
            <person name="Pavan W.J."/>
            <person name="Pavesi G."/>
            <person name="Pesole G."/>
            <person name="Petrovsky N."/>
            <person name="Piazza S."/>
            <person name="Reed J."/>
            <person name="Reid J.F."/>
            <person name="Ring B.Z."/>
            <person name="Ringwald M."/>
            <person name="Rost B."/>
            <person name="Ruan Y."/>
            <person name="Salzberg S.L."/>
            <person name="Sandelin A."/>
            <person name="Schneider C."/>
            <person name="Schoenbach C."/>
            <person name="Sekiguchi K."/>
            <person name="Semple C.A."/>
            <person name="Seno S."/>
            <person name="Sessa L."/>
            <person name="Sheng Y."/>
            <person name="Shibata Y."/>
            <person name="Shimada H."/>
            <person name="Shimada K."/>
            <person name="Silva D."/>
            <person name="Sinclair B."/>
            <person name="Sperling S."/>
            <person name="Stupka E."/>
            <person name="Sugiura K."/>
            <person name="Sultana R."/>
            <person name="Takenaka Y."/>
            <person name="Taki K."/>
            <person name="Tammoja K."/>
            <person name="Tan S.L."/>
            <person name="Tang S."/>
            <person name="Taylor M.S."/>
            <person name="Tegner J."/>
            <person name="Teichmann S.A."/>
            <person name="Ueda H.R."/>
            <person name="van Nimwegen E."/>
            <person name="Verardo R."/>
            <person name="Wei C.L."/>
            <person name="Yagi K."/>
            <person name="Yamanishi H."/>
            <person name="Zabarovsky E."/>
            <person name="Zhu S."/>
            <person name="Zimmer A."/>
            <person name="Hide W."/>
            <person name="Bult C."/>
            <person name="Grimmond S.M."/>
            <person name="Teasdale R.D."/>
            <person name="Liu E.T."/>
            <person name="Brusic V."/>
            <person name="Quackenbush J."/>
            <person name="Wahlestedt C."/>
            <person name="Mattick J.S."/>
            <person name="Hume D.A."/>
            <person name="Kai C."/>
            <person name="Sasaki D."/>
            <person name="Tomaru Y."/>
            <person name="Fukuda S."/>
            <person name="Kanamori-Katayama M."/>
            <person name="Suzuki M."/>
            <person name="Aoki J."/>
            <person name="Arakawa T."/>
            <person name="Iida J."/>
            <person name="Imamura K."/>
            <person name="Itoh M."/>
            <person name="Kato T."/>
            <person name="Kawaji H."/>
            <person name="Kawagashira N."/>
            <person name="Kawashima T."/>
            <person name="Kojima M."/>
            <person name="Kondo S."/>
            <person name="Konno H."/>
            <person name="Nakano K."/>
            <person name="Ninomiya N."/>
            <person name="Nishio T."/>
            <person name="Okada M."/>
            <person name="Plessy C."/>
            <person name="Shibata K."/>
            <person name="Shiraki T."/>
            <person name="Suzuki S."/>
            <person name="Tagami M."/>
            <person name="Waki K."/>
            <person name="Watahiki A."/>
            <person name="Okamura-Oho Y."/>
            <person name="Suzuki H."/>
            <person name="Kawai J."/>
            <person name="Hayashizaki Y."/>
        </authorList>
    </citation>
    <scope>NUCLEOTIDE SEQUENCE [LARGE SCALE MRNA]</scope>
    <source>
        <strain>C57BL/6J</strain>
        <tissue>Embryo</tissue>
        <tissue>Retina</tissue>
    </source>
</reference>
<reference key="2">
    <citation type="journal article" date="2003" name="DNA Res.">
        <title>Prediction of the coding sequences of mouse homologues of KIAA gene: II. The complete nucleotide sequences of 400 mouse KIAA-homologous cDNAs identified by screening of terminal sequences of cDNA clones randomly sampled from size-fractionated libraries.</title>
        <authorList>
            <person name="Okazaki N."/>
            <person name="Kikuno R."/>
            <person name="Ohara R."/>
            <person name="Inamoto S."/>
            <person name="Aizawa H."/>
            <person name="Yuasa S."/>
            <person name="Nakajima D."/>
            <person name="Nagase T."/>
            <person name="Ohara O."/>
            <person name="Koga H."/>
        </authorList>
    </citation>
    <scope>NUCLEOTIDE SEQUENCE [LARGE SCALE MRNA]</scope>
    <source>
        <tissue>Brain</tissue>
    </source>
</reference>
<reference key="3">
    <citation type="submission" date="2005-07" db="EMBL/GenBank/DDBJ databases">
        <authorList>
            <person name="Mural R.J."/>
            <person name="Adams M.D."/>
            <person name="Myers E.W."/>
            <person name="Smith H.O."/>
            <person name="Venter J.C."/>
        </authorList>
    </citation>
    <scope>NUCLEOTIDE SEQUENCE [LARGE SCALE GENOMIC DNA]</scope>
</reference>
<reference key="4">
    <citation type="journal article" date="2004" name="Genome Res.">
        <title>The status, quality, and expansion of the NIH full-length cDNA project: the Mammalian Gene Collection (MGC).</title>
        <authorList>
            <consortium name="The MGC Project Team"/>
        </authorList>
    </citation>
    <scope>NUCLEOTIDE SEQUENCE [LARGE SCALE MRNA]</scope>
</reference>
<reference key="5">
    <citation type="journal article" date="2006" name="Gene">
        <title>Comparative analysis of structure, expression and PSD95-binding capacity of Lrfn, a novel family of neuronal transmembrane proteins.</title>
        <authorList>
            <person name="Morimura N."/>
            <person name="Inoue T."/>
            <person name="Katayama K."/>
            <person name="Aruga J."/>
        </authorList>
    </citation>
    <scope>FUNCTION</scope>
    <scope>INTERACTION WITH DLG4</scope>
    <scope>DEVELOPMENTAL STAGE</scope>
    <scope>TISSUE SPECIFICITY</scope>
    <scope>GLYCOSYLATION</scope>
    <scope>SUBCELLULAR LOCATION</scope>
    <scope>TOPOLOGY</scope>
    <scope>MUTAGENESIS OF 787-THR-VAL-788</scope>
</reference>
<reference key="6">
    <citation type="journal article" date="2010" name="Cell">
        <title>A tissue-specific atlas of mouse protein phosphorylation and expression.</title>
        <authorList>
            <person name="Huttlin E.L."/>
            <person name="Jedrychowski M.P."/>
            <person name="Elias J.E."/>
            <person name="Goswami T."/>
            <person name="Rad R."/>
            <person name="Beausoleil S.A."/>
            <person name="Villen J."/>
            <person name="Haas W."/>
            <person name="Sowa M.E."/>
            <person name="Gygi S.P."/>
        </authorList>
    </citation>
    <scope>IDENTIFICATION BY MASS SPECTROMETRY [LARGE SCALE ANALYSIS]</scope>
    <source>
        <tissue>Brain</tissue>
    </source>
</reference>
<evidence type="ECO:0000250" key="1"/>
<evidence type="ECO:0000255" key="2"/>
<evidence type="ECO:0000255" key="3">
    <source>
        <dbReference type="PROSITE-ProRule" id="PRU00114"/>
    </source>
</evidence>
<evidence type="ECO:0000255" key="4">
    <source>
        <dbReference type="PROSITE-ProRule" id="PRU00316"/>
    </source>
</evidence>
<evidence type="ECO:0000256" key="5">
    <source>
        <dbReference type="SAM" id="MobiDB-lite"/>
    </source>
</evidence>
<evidence type="ECO:0000269" key="6">
    <source>
    </source>
</evidence>
<evidence type="ECO:0000305" key="7"/>
<comment type="function">
    <text evidence="1 6">Promotes neurite outgrowth in hippocampal neurons. Enhances the cell surface expression of 2 NMDA receptor subunits GRIN1 and GRIN2A (By similarity). May play a role in redistributing DLG4 to the cell periphery.</text>
</comment>
<comment type="subunit">
    <text evidence="1">Forms heteromeric complexes with LRFN1, LRFN3, LRFN4 and LRFN5. Can form homomeric complexes, but not across cell junctions (By similarity). Interacts with DLG4. Directly interacts with DLG1, DLG2 and DLG3 (By similarity). Directly interacts with 2 NMDA receptor subunits GRIN1 and GRIN2A (By similarity).</text>
</comment>
<comment type="interaction">
    <interactant intactId="EBI-877092">
        <id>Q80TG9</id>
    </interactant>
    <interactant intactId="EBI-514290">
        <id>Q811D0</id>
        <label>Dlg1</label>
    </interactant>
    <organismsDiffer>false</organismsDiffer>
    <experiments>3</experiments>
</comment>
<comment type="interaction">
    <interactant intactId="EBI-877092">
        <id>Q80TG9</id>
    </interactant>
    <interactant intactId="EBI-300895">
        <id>Q62108</id>
        <label>Dlg4</label>
    </interactant>
    <organismsDiffer>false</organismsDiffer>
    <experiments>3</experiments>
</comment>
<comment type="interaction">
    <interactant intactId="EBI-877092">
        <id>Q80TG9</id>
    </interactant>
    <interactant intactId="EBI-877897">
        <id>P35439</id>
        <label>Grin1</label>
    </interactant>
    <organismsDiffer>true</organismsDiffer>
    <experiments>2</experiments>
</comment>
<comment type="interaction">
    <interactant intactId="EBI-877092">
        <id>Q80TG9</id>
    </interactant>
    <interactant intactId="EBI-877923">
        <id>P35439-1</id>
        <label>Grin1</label>
    </interactant>
    <organismsDiffer>true</organismsDiffer>
    <experiments>2</experiments>
</comment>
<comment type="interaction">
    <interactant intactId="EBI-877092">
        <id>Q80TG9</id>
    </interactant>
    <interactant intactId="EBI-877935">
        <id>P35439-4</id>
        <label>Grin1</label>
    </interactant>
    <organismsDiffer>true</organismsDiffer>
    <experiments>2</experiments>
</comment>
<comment type="subcellular location">
    <subcellularLocation>
        <location evidence="6">Membrane</location>
        <topology evidence="6">Single-pass type I membrane protein</topology>
    </subcellularLocation>
    <subcellularLocation>
        <location evidence="6">Synapse</location>
    </subcellularLocation>
    <subcellularLocation>
        <location evidence="1">Postsynaptic cell membrane</location>
    </subcellularLocation>
</comment>
<comment type="tissue specificity">
    <text evidence="6">Predominantly expressed in the brain, with a weak, but broad expression in the cerebral cortex and diencephalic nuclei. Strongly expressed in both the pyramidal layer and the dentate gyrus of the hippocampus. Also detected in other parts of the central nervous system, including the olfactory bulb, pons, cerebellum, and medulla oblongata, as well as in the peripheral nervous system, such as the ganglia of cranial nerves and the dorsal root ganglion during gestation.</text>
</comment>
<comment type="developmental stage">
    <text evidence="6">Expression starts around 11.5-12.5 dpc. At 11.5 dpc, detected in the outer layer of the telencephalic vesicles. This pattern of expression continues until 17.5 dpc with expression in the cortical plate, but not in the inner layer of the cerebral cortex, including subplate, ventricular zone, and subventricular zone. As also detected in the hippocampus, amygdala and widely in diencephalic nuclei.</text>
</comment>
<comment type="domain">
    <text evidence="1">The PDZ-binding motif is required for cell surface expression, neurite outgrowth promotion and interaction with DLG1, DLG3 and DLG4.</text>
</comment>
<comment type="PTM">
    <text evidence="6">Glycosylated.</text>
</comment>
<comment type="similarity">
    <text evidence="7">Belongs to the LRFN family.</text>
</comment>
<comment type="sequence caution" evidence="7">
    <conflict type="erroneous initiation">
        <sequence resource="EMBL-CDS" id="BAC65758"/>
    </conflict>
    <text>Extended N-terminus.</text>
</comment>
<feature type="signal peptide" evidence="2">
    <location>
        <begin position="1"/>
        <end position="20"/>
    </location>
</feature>
<feature type="chain" id="PRO_0000014840" description="Leucine-rich repeat and fibronectin type-III domain-containing protein 2">
    <location>
        <begin position="21"/>
        <end position="788"/>
    </location>
</feature>
<feature type="topological domain" description="Extracellular" evidence="2">
    <location>
        <begin position="21"/>
        <end position="534"/>
    </location>
</feature>
<feature type="transmembrane region" description="Helical" evidence="2">
    <location>
        <begin position="535"/>
        <end position="555"/>
    </location>
</feature>
<feature type="topological domain" description="Cytoplasmic" evidence="2">
    <location>
        <begin position="556"/>
        <end position="788"/>
    </location>
</feature>
<feature type="domain" description="LRRNT">
    <location>
        <begin position="21"/>
        <end position="52"/>
    </location>
</feature>
<feature type="repeat" description="LRR 1">
    <location>
        <begin position="53"/>
        <end position="74"/>
    </location>
</feature>
<feature type="repeat" description="LRR 2">
    <location>
        <begin position="77"/>
        <end position="98"/>
    </location>
</feature>
<feature type="repeat" description="LRR 3">
    <location>
        <begin position="101"/>
        <end position="122"/>
    </location>
</feature>
<feature type="repeat" description="LRR 4">
    <location>
        <begin position="125"/>
        <end position="146"/>
    </location>
</feature>
<feature type="repeat" description="LRR 5">
    <location>
        <begin position="150"/>
        <end position="171"/>
    </location>
</feature>
<feature type="repeat" description="LRR 6">
    <location>
        <begin position="174"/>
        <end position="195"/>
    </location>
</feature>
<feature type="repeat" description="LRR 7">
    <location>
        <begin position="198"/>
        <end position="219"/>
    </location>
</feature>
<feature type="domain" description="LRRCT">
    <location>
        <begin position="242"/>
        <end position="288"/>
    </location>
</feature>
<feature type="domain" description="Ig-like">
    <location>
        <begin position="289"/>
        <end position="375"/>
    </location>
</feature>
<feature type="domain" description="Fibronectin type-III" evidence="4">
    <location>
        <begin position="422"/>
        <end position="518"/>
    </location>
</feature>
<feature type="region of interest" description="Disordered" evidence="5">
    <location>
        <begin position="383"/>
        <end position="423"/>
    </location>
</feature>
<feature type="region of interest" description="Disordered" evidence="5">
    <location>
        <begin position="620"/>
        <end position="655"/>
    </location>
</feature>
<feature type="region of interest" description="Disordered" evidence="5">
    <location>
        <begin position="668"/>
        <end position="711"/>
    </location>
</feature>
<feature type="short sequence motif" description="PDZ-binding">
    <location>
        <begin position="785"/>
        <end position="788"/>
    </location>
</feature>
<feature type="compositionally biased region" description="Low complexity" evidence="5">
    <location>
        <begin position="620"/>
        <end position="631"/>
    </location>
</feature>
<feature type="compositionally biased region" description="Pro residues" evidence="5">
    <location>
        <begin position="642"/>
        <end position="651"/>
    </location>
</feature>
<feature type="glycosylation site" description="N-linked (GlcNAc...) asparagine" evidence="2">
    <location>
        <position position="29"/>
    </location>
</feature>
<feature type="glycosylation site" description="N-linked (GlcNAc...) asparagine" evidence="2">
    <location>
        <position position="332"/>
    </location>
</feature>
<feature type="glycosylation site" description="N-linked (GlcNAc...) asparagine" evidence="2">
    <location>
        <position position="341"/>
    </location>
</feature>
<feature type="glycosylation site" description="N-linked (GlcNAc...) asparagine" evidence="2">
    <location>
        <position position="384"/>
    </location>
</feature>
<feature type="disulfide bond" evidence="3">
    <location>
        <begin position="310"/>
        <end position="359"/>
    </location>
</feature>
<feature type="mutagenesis site" description="Loss of DLG4-binding." evidence="6">
    <location>
        <begin position="787"/>
        <end position="788"/>
    </location>
</feature>
<feature type="sequence conflict" description="In Ref. 1; BAB30828." evidence="7" ref="1">
    <original>G</original>
    <variation>R</variation>
    <location>
        <position position="42"/>
    </location>
</feature>
<feature type="sequence conflict" description="In Ref. 1; BAB30828." evidence="7" ref="1">
    <original>L</original>
    <variation>K</variation>
    <location>
        <position position="530"/>
    </location>
</feature>
<accession>Q80TG9</accession>
<accession>B9EIF8</accession>
<accession>Q9CYK3</accession>
<dbReference type="EMBL" id="AK017594">
    <property type="protein sequence ID" value="BAB30828.1"/>
    <property type="molecule type" value="mRNA"/>
</dbReference>
<dbReference type="EMBL" id="AK044375">
    <property type="protein sequence ID" value="BAC31891.1"/>
    <property type="molecule type" value="mRNA"/>
</dbReference>
<dbReference type="EMBL" id="AK122476">
    <property type="protein sequence ID" value="BAC65758.1"/>
    <property type="status" value="ALT_INIT"/>
    <property type="molecule type" value="mRNA"/>
</dbReference>
<dbReference type="EMBL" id="CH466559">
    <property type="protein sequence ID" value="EDL23629.1"/>
    <property type="molecule type" value="Genomic_DNA"/>
</dbReference>
<dbReference type="EMBL" id="BC139418">
    <property type="protein sequence ID" value="AAI39419.1"/>
    <property type="molecule type" value="mRNA"/>
</dbReference>
<dbReference type="CCDS" id="CCDS28871.1"/>
<dbReference type="RefSeq" id="NP_081728.2">
    <property type="nucleotide sequence ID" value="NM_027452.3"/>
</dbReference>
<dbReference type="SMR" id="Q80TG9"/>
<dbReference type="BioGRID" id="214114">
    <property type="interactions" value="1"/>
</dbReference>
<dbReference type="FunCoup" id="Q80TG9">
    <property type="interactions" value="208"/>
</dbReference>
<dbReference type="IntAct" id="Q80TG9">
    <property type="interactions" value="6"/>
</dbReference>
<dbReference type="MINT" id="Q80TG9"/>
<dbReference type="STRING" id="10090.ENSMUSP00000047573"/>
<dbReference type="GlyCosmos" id="Q80TG9">
    <property type="glycosylation" value="4 sites, No reported glycans"/>
</dbReference>
<dbReference type="GlyGen" id="Q80TG9">
    <property type="glycosylation" value="6 sites, 3 N-linked glycans (3 sites)"/>
</dbReference>
<dbReference type="iPTMnet" id="Q80TG9"/>
<dbReference type="PhosphoSitePlus" id="Q80TG9"/>
<dbReference type="SwissPalm" id="Q80TG9"/>
<dbReference type="PaxDb" id="10090-ENSMUSP00000047573"/>
<dbReference type="ProteomicsDB" id="252522"/>
<dbReference type="Antibodypedia" id="2525">
    <property type="antibodies" value="104 antibodies from 23 providers"/>
</dbReference>
<dbReference type="DNASU" id="70530"/>
<dbReference type="Ensembl" id="ENSMUST00000046254.3">
    <property type="protein sequence ID" value="ENSMUSP00000047573.3"/>
    <property type="gene ID" value="ENSMUSG00000040490.5"/>
</dbReference>
<dbReference type="GeneID" id="70530"/>
<dbReference type="KEGG" id="mmu:70530"/>
<dbReference type="UCSC" id="uc008cyd.2">
    <property type="organism name" value="mouse"/>
</dbReference>
<dbReference type="AGR" id="MGI:1917780"/>
<dbReference type="CTD" id="57497"/>
<dbReference type="MGI" id="MGI:1917780">
    <property type="gene designation" value="Lrfn2"/>
</dbReference>
<dbReference type="VEuPathDB" id="HostDB:ENSMUSG00000040490"/>
<dbReference type="eggNOG" id="KOG0619">
    <property type="taxonomic scope" value="Eukaryota"/>
</dbReference>
<dbReference type="GeneTree" id="ENSGT00940000156417"/>
<dbReference type="HOGENOM" id="CLU_016998_1_0_1"/>
<dbReference type="InParanoid" id="Q80TG9"/>
<dbReference type="OMA" id="ELMDFSA"/>
<dbReference type="OrthoDB" id="1394818at2759"/>
<dbReference type="PhylomeDB" id="Q80TG9"/>
<dbReference type="TreeFam" id="TF350185"/>
<dbReference type="Reactome" id="R-MMU-8849932">
    <property type="pathway name" value="Synaptic adhesion-like molecules"/>
</dbReference>
<dbReference type="BioGRID-ORCS" id="70530">
    <property type="hits" value="6 hits in 78 CRISPR screens"/>
</dbReference>
<dbReference type="ChiTaRS" id="Lrfn2">
    <property type="organism name" value="mouse"/>
</dbReference>
<dbReference type="PRO" id="PR:Q80TG9"/>
<dbReference type="Proteomes" id="UP000000589">
    <property type="component" value="Chromosome 17"/>
</dbReference>
<dbReference type="RNAct" id="Q80TG9">
    <property type="molecule type" value="protein"/>
</dbReference>
<dbReference type="Bgee" id="ENSMUSG00000040490">
    <property type="expression patterns" value="Expressed in dentate gyrus of hippocampal formation granule cell and 51 other cell types or tissues"/>
</dbReference>
<dbReference type="GO" id="GO:0009986">
    <property type="term" value="C:cell surface"/>
    <property type="evidence" value="ECO:0000314"/>
    <property type="project" value="MGI"/>
</dbReference>
<dbReference type="GO" id="GO:0098794">
    <property type="term" value="C:postsynapse"/>
    <property type="evidence" value="ECO:0000314"/>
    <property type="project" value="SynGO"/>
</dbReference>
<dbReference type="GO" id="GO:0045211">
    <property type="term" value="C:postsynaptic membrane"/>
    <property type="evidence" value="ECO:0007669"/>
    <property type="project" value="UniProtKB-SubCell"/>
</dbReference>
<dbReference type="GO" id="GO:0098793">
    <property type="term" value="C:presynapse"/>
    <property type="evidence" value="ECO:0000314"/>
    <property type="project" value="SynGO"/>
</dbReference>
<dbReference type="GO" id="GO:0098685">
    <property type="term" value="C:Schaffer collateral - CA1 synapse"/>
    <property type="evidence" value="ECO:0000314"/>
    <property type="project" value="SynGO"/>
</dbReference>
<dbReference type="GO" id="GO:0050804">
    <property type="term" value="P:modulation of chemical synaptic transmission"/>
    <property type="evidence" value="ECO:0000314"/>
    <property type="project" value="SynGO"/>
</dbReference>
<dbReference type="GO" id="GO:0099175">
    <property type="term" value="P:regulation of postsynapse organization"/>
    <property type="evidence" value="ECO:0000314"/>
    <property type="project" value="SynGO"/>
</dbReference>
<dbReference type="CDD" id="cd00063">
    <property type="entry name" value="FN3"/>
    <property type="match status" value="1"/>
</dbReference>
<dbReference type="FunFam" id="2.60.40.10:FF:000235">
    <property type="entry name" value="Leucine-rich repeat and fibronectin type III domain-containing 2"/>
    <property type="match status" value="1"/>
</dbReference>
<dbReference type="FunFam" id="3.80.10.10:FF:000045">
    <property type="entry name" value="Leucine-rich repeat and fibronectin type III domain-containing 2"/>
    <property type="match status" value="1"/>
</dbReference>
<dbReference type="FunFam" id="2.60.40.10:FF:000091">
    <property type="entry name" value="Leucine-rich repeat and fibronectin type III domain-containing protein 1"/>
    <property type="match status" value="1"/>
</dbReference>
<dbReference type="FunFam" id="3.80.10.10:FF:000019">
    <property type="entry name" value="leucine-rich repeat and fibronectin type III domain-containing protein 1"/>
    <property type="match status" value="1"/>
</dbReference>
<dbReference type="Gene3D" id="2.60.40.10">
    <property type="entry name" value="Immunoglobulins"/>
    <property type="match status" value="2"/>
</dbReference>
<dbReference type="Gene3D" id="3.80.10.10">
    <property type="entry name" value="Ribonuclease Inhibitor"/>
    <property type="match status" value="2"/>
</dbReference>
<dbReference type="InterPro" id="IPR000483">
    <property type="entry name" value="Cys-rich_flank_reg_C"/>
</dbReference>
<dbReference type="InterPro" id="IPR003961">
    <property type="entry name" value="FN3_dom"/>
</dbReference>
<dbReference type="InterPro" id="IPR036116">
    <property type="entry name" value="FN3_sf"/>
</dbReference>
<dbReference type="InterPro" id="IPR007110">
    <property type="entry name" value="Ig-like_dom"/>
</dbReference>
<dbReference type="InterPro" id="IPR036179">
    <property type="entry name" value="Ig-like_dom_sf"/>
</dbReference>
<dbReference type="InterPro" id="IPR013783">
    <property type="entry name" value="Ig-like_fold"/>
</dbReference>
<dbReference type="InterPro" id="IPR013098">
    <property type="entry name" value="Ig_I-set"/>
</dbReference>
<dbReference type="InterPro" id="IPR003599">
    <property type="entry name" value="Ig_sub"/>
</dbReference>
<dbReference type="InterPro" id="IPR003598">
    <property type="entry name" value="Ig_sub2"/>
</dbReference>
<dbReference type="InterPro" id="IPR001611">
    <property type="entry name" value="Leu-rich_rpt"/>
</dbReference>
<dbReference type="InterPro" id="IPR003591">
    <property type="entry name" value="Leu-rich_rpt_typical-subtyp"/>
</dbReference>
<dbReference type="InterPro" id="IPR050467">
    <property type="entry name" value="LRFN"/>
</dbReference>
<dbReference type="InterPro" id="IPR032675">
    <property type="entry name" value="LRR_dom_sf"/>
</dbReference>
<dbReference type="PANTHER" id="PTHR45842:SF6">
    <property type="entry name" value="LEUCINE-RICH REPEAT AND FIBRONECTIN TYPE-III DOMAIN-CONTAINING PROTEIN 2"/>
    <property type="match status" value="1"/>
</dbReference>
<dbReference type="PANTHER" id="PTHR45842">
    <property type="entry name" value="SYNAPTIC ADHESION-LIKE MOLECULE SALM"/>
    <property type="match status" value="1"/>
</dbReference>
<dbReference type="Pfam" id="PF00041">
    <property type="entry name" value="fn3"/>
    <property type="match status" value="1"/>
</dbReference>
<dbReference type="Pfam" id="PF07679">
    <property type="entry name" value="I-set"/>
    <property type="match status" value="1"/>
</dbReference>
<dbReference type="Pfam" id="PF13855">
    <property type="entry name" value="LRR_8"/>
    <property type="match status" value="2"/>
</dbReference>
<dbReference type="SMART" id="SM00409">
    <property type="entry name" value="IG"/>
    <property type="match status" value="1"/>
</dbReference>
<dbReference type="SMART" id="SM00408">
    <property type="entry name" value="IGc2"/>
    <property type="match status" value="1"/>
</dbReference>
<dbReference type="SMART" id="SM00369">
    <property type="entry name" value="LRR_TYP"/>
    <property type="match status" value="6"/>
</dbReference>
<dbReference type="SMART" id="SM00082">
    <property type="entry name" value="LRRCT"/>
    <property type="match status" value="1"/>
</dbReference>
<dbReference type="SUPFAM" id="SSF49265">
    <property type="entry name" value="Fibronectin type III"/>
    <property type="match status" value="1"/>
</dbReference>
<dbReference type="SUPFAM" id="SSF48726">
    <property type="entry name" value="Immunoglobulin"/>
    <property type="match status" value="1"/>
</dbReference>
<dbReference type="SUPFAM" id="SSF52058">
    <property type="entry name" value="L domain-like"/>
    <property type="match status" value="1"/>
</dbReference>
<dbReference type="PROSITE" id="PS50853">
    <property type="entry name" value="FN3"/>
    <property type="match status" value="1"/>
</dbReference>
<dbReference type="PROSITE" id="PS50835">
    <property type="entry name" value="IG_LIKE"/>
    <property type="match status" value="1"/>
</dbReference>
<dbReference type="PROSITE" id="PS51450">
    <property type="entry name" value="LRR"/>
    <property type="match status" value="6"/>
</dbReference>
<name>LRFN2_MOUSE</name>
<organism>
    <name type="scientific">Mus musculus</name>
    <name type="common">Mouse</name>
    <dbReference type="NCBI Taxonomy" id="10090"/>
    <lineage>
        <taxon>Eukaryota</taxon>
        <taxon>Metazoa</taxon>
        <taxon>Chordata</taxon>
        <taxon>Craniata</taxon>
        <taxon>Vertebrata</taxon>
        <taxon>Euteleostomi</taxon>
        <taxon>Mammalia</taxon>
        <taxon>Eutheria</taxon>
        <taxon>Euarchontoglires</taxon>
        <taxon>Glires</taxon>
        <taxon>Rodentia</taxon>
        <taxon>Myomorpha</taxon>
        <taxon>Muroidea</taxon>
        <taxon>Muridae</taxon>
        <taxon>Murinae</taxon>
        <taxon>Mus</taxon>
        <taxon>Mus</taxon>
    </lineage>
</organism>
<protein>
    <recommendedName>
        <fullName>Leucine-rich repeat and fibronectin type-III domain-containing protein 2</fullName>
    </recommendedName>
</protein>